<gene>
    <name evidence="1" type="primary">trpB</name>
    <name type="ordered locus">Dshi_1031</name>
</gene>
<feature type="chain" id="PRO_1000076385" description="Tryptophan synthase beta chain">
    <location>
        <begin position="1"/>
        <end position="410"/>
    </location>
</feature>
<feature type="modified residue" description="N6-(pyridoxal phosphate)lysine" evidence="1">
    <location>
        <position position="98"/>
    </location>
</feature>
<dbReference type="EC" id="4.2.1.20" evidence="1"/>
<dbReference type="EMBL" id="CP000830">
    <property type="protein sequence ID" value="ABV92773.1"/>
    <property type="molecule type" value="Genomic_DNA"/>
</dbReference>
<dbReference type="RefSeq" id="WP_012177704.1">
    <property type="nucleotide sequence ID" value="NC_009952.1"/>
</dbReference>
<dbReference type="SMR" id="A8LSF9"/>
<dbReference type="STRING" id="398580.Dshi_1031"/>
<dbReference type="KEGG" id="dsh:Dshi_1031"/>
<dbReference type="eggNOG" id="COG0133">
    <property type="taxonomic scope" value="Bacteria"/>
</dbReference>
<dbReference type="HOGENOM" id="CLU_016734_3_1_5"/>
<dbReference type="OrthoDB" id="9766131at2"/>
<dbReference type="UniPathway" id="UPA00035">
    <property type="reaction ID" value="UER00044"/>
</dbReference>
<dbReference type="Proteomes" id="UP000006833">
    <property type="component" value="Chromosome"/>
</dbReference>
<dbReference type="GO" id="GO:0005737">
    <property type="term" value="C:cytoplasm"/>
    <property type="evidence" value="ECO:0007669"/>
    <property type="project" value="TreeGrafter"/>
</dbReference>
<dbReference type="GO" id="GO:0004834">
    <property type="term" value="F:tryptophan synthase activity"/>
    <property type="evidence" value="ECO:0007669"/>
    <property type="project" value="UniProtKB-UniRule"/>
</dbReference>
<dbReference type="CDD" id="cd06446">
    <property type="entry name" value="Trp-synth_B"/>
    <property type="match status" value="1"/>
</dbReference>
<dbReference type="FunFam" id="3.40.50.1100:FF:000001">
    <property type="entry name" value="Tryptophan synthase beta chain"/>
    <property type="match status" value="1"/>
</dbReference>
<dbReference type="FunFam" id="3.40.50.1100:FF:000004">
    <property type="entry name" value="Tryptophan synthase beta chain"/>
    <property type="match status" value="1"/>
</dbReference>
<dbReference type="Gene3D" id="3.40.50.1100">
    <property type="match status" value="2"/>
</dbReference>
<dbReference type="HAMAP" id="MF_00133">
    <property type="entry name" value="Trp_synth_beta"/>
    <property type="match status" value="1"/>
</dbReference>
<dbReference type="InterPro" id="IPR006653">
    <property type="entry name" value="Trp_synth_b_CS"/>
</dbReference>
<dbReference type="InterPro" id="IPR006654">
    <property type="entry name" value="Trp_synth_beta"/>
</dbReference>
<dbReference type="InterPro" id="IPR023026">
    <property type="entry name" value="Trp_synth_beta/beta-like"/>
</dbReference>
<dbReference type="InterPro" id="IPR001926">
    <property type="entry name" value="TrpB-like_PALP"/>
</dbReference>
<dbReference type="InterPro" id="IPR036052">
    <property type="entry name" value="TrpB-like_PALP_sf"/>
</dbReference>
<dbReference type="NCBIfam" id="TIGR00263">
    <property type="entry name" value="trpB"/>
    <property type="match status" value="1"/>
</dbReference>
<dbReference type="PANTHER" id="PTHR48077:SF3">
    <property type="entry name" value="TRYPTOPHAN SYNTHASE"/>
    <property type="match status" value="1"/>
</dbReference>
<dbReference type="PANTHER" id="PTHR48077">
    <property type="entry name" value="TRYPTOPHAN SYNTHASE-RELATED"/>
    <property type="match status" value="1"/>
</dbReference>
<dbReference type="Pfam" id="PF00291">
    <property type="entry name" value="PALP"/>
    <property type="match status" value="1"/>
</dbReference>
<dbReference type="PIRSF" id="PIRSF001413">
    <property type="entry name" value="Trp_syn_beta"/>
    <property type="match status" value="1"/>
</dbReference>
<dbReference type="SUPFAM" id="SSF53686">
    <property type="entry name" value="Tryptophan synthase beta subunit-like PLP-dependent enzymes"/>
    <property type="match status" value="1"/>
</dbReference>
<dbReference type="PROSITE" id="PS00168">
    <property type="entry name" value="TRP_SYNTHASE_BETA"/>
    <property type="match status" value="1"/>
</dbReference>
<reference key="1">
    <citation type="journal article" date="2010" name="ISME J.">
        <title>The complete genome sequence of the algal symbiont Dinoroseobacter shibae: a hitchhiker's guide to life in the sea.</title>
        <authorList>
            <person name="Wagner-Dobler I."/>
            <person name="Ballhausen B."/>
            <person name="Berger M."/>
            <person name="Brinkhoff T."/>
            <person name="Buchholz I."/>
            <person name="Bunk B."/>
            <person name="Cypionka H."/>
            <person name="Daniel R."/>
            <person name="Drepper T."/>
            <person name="Gerdts G."/>
            <person name="Hahnke S."/>
            <person name="Han C."/>
            <person name="Jahn D."/>
            <person name="Kalhoefer D."/>
            <person name="Kiss H."/>
            <person name="Klenk H.P."/>
            <person name="Kyrpides N."/>
            <person name="Liebl W."/>
            <person name="Liesegang H."/>
            <person name="Meincke L."/>
            <person name="Pati A."/>
            <person name="Petersen J."/>
            <person name="Piekarski T."/>
            <person name="Pommerenke C."/>
            <person name="Pradella S."/>
            <person name="Pukall R."/>
            <person name="Rabus R."/>
            <person name="Stackebrandt E."/>
            <person name="Thole S."/>
            <person name="Thompson L."/>
            <person name="Tielen P."/>
            <person name="Tomasch J."/>
            <person name="von Jan M."/>
            <person name="Wanphrut N."/>
            <person name="Wichels A."/>
            <person name="Zech H."/>
            <person name="Simon M."/>
        </authorList>
    </citation>
    <scope>NUCLEOTIDE SEQUENCE [LARGE SCALE GENOMIC DNA]</scope>
    <source>
        <strain>DSM 16493 / NCIMB 14021 / DFL 12</strain>
    </source>
</reference>
<evidence type="ECO:0000255" key="1">
    <source>
        <dbReference type="HAMAP-Rule" id="MF_00133"/>
    </source>
</evidence>
<name>TRPB_DINSH</name>
<organism>
    <name type="scientific">Dinoroseobacter shibae (strain DSM 16493 / NCIMB 14021 / DFL 12)</name>
    <dbReference type="NCBI Taxonomy" id="398580"/>
    <lineage>
        <taxon>Bacteria</taxon>
        <taxon>Pseudomonadati</taxon>
        <taxon>Pseudomonadota</taxon>
        <taxon>Alphaproteobacteria</taxon>
        <taxon>Rhodobacterales</taxon>
        <taxon>Roseobacteraceae</taxon>
        <taxon>Dinoroseobacter</taxon>
    </lineage>
</organism>
<sequence>MPDDLINSFMTGPDENGRFGDFGGRFVSETLMPLILELERQYEFAKTDQAFWDEMHHLWTHYVGRPSPLYFAERLTERLGGAKVYLKRDELNHTGAHKINNVLGQIILARRMGKTRIIAETGAGQHGVATATVCAKFGLKCVVYMGAHDVERQAPNVFRMKLLGAEVVPVTSGRGTLKDAMNDALRDWVTNVRETFYCIGTVAGPHPYPAMVRDFQAIIGQEAREQMMEAEGRLPDTLIAAIGGGSNAMGLFYPFLDDKEVAIIGVEAGGKGVNEKMEHCASLTGGRPGVLHGNRTYLLQDDDGQILEGFSISAGLDYPGIGPEHAWLHDIGRAKYVSITDAEALDAFQLCCETEGIIPALEPSHALAHVAKIAPDLPRDHIICMNMCGRGDKDIFTVAKALGQDMSGAV</sequence>
<accession>A8LSF9</accession>
<proteinExistence type="inferred from homology"/>
<comment type="function">
    <text evidence="1">The beta subunit is responsible for the synthesis of L-tryptophan from indole and L-serine.</text>
</comment>
<comment type="catalytic activity">
    <reaction evidence="1">
        <text>(1S,2R)-1-C-(indol-3-yl)glycerol 3-phosphate + L-serine = D-glyceraldehyde 3-phosphate + L-tryptophan + H2O</text>
        <dbReference type="Rhea" id="RHEA:10532"/>
        <dbReference type="ChEBI" id="CHEBI:15377"/>
        <dbReference type="ChEBI" id="CHEBI:33384"/>
        <dbReference type="ChEBI" id="CHEBI:57912"/>
        <dbReference type="ChEBI" id="CHEBI:58866"/>
        <dbReference type="ChEBI" id="CHEBI:59776"/>
        <dbReference type="EC" id="4.2.1.20"/>
    </reaction>
</comment>
<comment type="cofactor">
    <cofactor evidence="1">
        <name>pyridoxal 5'-phosphate</name>
        <dbReference type="ChEBI" id="CHEBI:597326"/>
    </cofactor>
</comment>
<comment type="pathway">
    <text evidence="1">Amino-acid biosynthesis; L-tryptophan biosynthesis; L-tryptophan from chorismate: step 5/5.</text>
</comment>
<comment type="subunit">
    <text evidence="1">Tetramer of two alpha and two beta chains.</text>
</comment>
<comment type="similarity">
    <text evidence="1">Belongs to the TrpB family.</text>
</comment>
<keyword id="KW-0028">Amino-acid biosynthesis</keyword>
<keyword id="KW-0057">Aromatic amino acid biosynthesis</keyword>
<keyword id="KW-0456">Lyase</keyword>
<keyword id="KW-0663">Pyridoxal phosphate</keyword>
<keyword id="KW-1185">Reference proteome</keyword>
<keyword id="KW-0822">Tryptophan biosynthesis</keyword>
<protein>
    <recommendedName>
        <fullName evidence="1">Tryptophan synthase beta chain</fullName>
        <ecNumber evidence="1">4.2.1.20</ecNumber>
    </recommendedName>
</protein>